<sequence length="274" mass="29853">MAIHLYKTSTPSTRNGAVASQVKSNPRNNLIYGQHHCGKGRNARGIITARHRGGGHKRLYRKIDFRRNAKDIYGRIVTIEYDPNRNAYICLIHYGDGEKRYILHPRGAIIGDTIVSGTEVPIKMGNALPLTDMPLGTAIHNIEITLGKGGQLARAAGAVAKLIAKEGKSATLKLPSGEVRLISKNCSATVGQVGNVGVNQKSLGRAGSKCWLGKRPVVRGVVMNPVDHPHGGGEGRAPIGRKKPVTPWGYPALGRRTRKRKKYSETLILRRRSK</sequence>
<protein>
    <recommendedName>
        <fullName evidence="2">Large ribosomal subunit protein uL2cz/uL2cy</fullName>
    </recommendedName>
    <alternativeName>
        <fullName evidence="4">50S ribosomal protein L2, chloroplastic</fullName>
    </alternativeName>
</protein>
<evidence type="ECO:0000250" key="1"/>
<evidence type="ECO:0000255" key="2">
    <source>
        <dbReference type="HAMAP-Rule" id="MF_01320"/>
    </source>
</evidence>
<evidence type="ECO:0000256" key="3">
    <source>
        <dbReference type="SAM" id="MobiDB-lite"/>
    </source>
</evidence>
<evidence type="ECO:0000305" key="4"/>
<proteinExistence type="inferred from homology"/>
<geneLocation type="chloroplast"/>
<dbReference type="EMBL" id="AP009372">
    <property type="protein sequence ID" value="BAF50327.1"/>
    <property type="molecule type" value="Genomic_DNA"/>
</dbReference>
<dbReference type="EMBL" id="AP009372">
    <property type="protein sequence ID" value="BAF50354.1"/>
    <property type="molecule type" value="Genomic_DNA"/>
</dbReference>
<dbReference type="SMR" id="A4QKX2"/>
<dbReference type="GO" id="GO:0009507">
    <property type="term" value="C:chloroplast"/>
    <property type="evidence" value="ECO:0007669"/>
    <property type="project" value="UniProtKB-SubCell"/>
</dbReference>
<dbReference type="GO" id="GO:0005762">
    <property type="term" value="C:mitochondrial large ribosomal subunit"/>
    <property type="evidence" value="ECO:0007669"/>
    <property type="project" value="TreeGrafter"/>
</dbReference>
<dbReference type="GO" id="GO:0019843">
    <property type="term" value="F:rRNA binding"/>
    <property type="evidence" value="ECO:0007669"/>
    <property type="project" value="UniProtKB-UniRule"/>
</dbReference>
<dbReference type="GO" id="GO:0003735">
    <property type="term" value="F:structural constituent of ribosome"/>
    <property type="evidence" value="ECO:0007669"/>
    <property type="project" value="InterPro"/>
</dbReference>
<dbReference type="GO" id="GO:0016740">
    <property type="term" value="F:transferase activity"/>
    <property type="evidence" value="ECO:0007669"/>
    <property type="project" value="InterPro"/>
</dbReference>
<dbReference type="GO" id="GO:0032543">
    <property type="term" value="P:mitochondrial translation"/>
    <property type="evidence" value="ECO:0007669"/>
    <property type="project" value="TreeGrafter"/>
</dbReference>
<dbReference type="FunFam" id="4.10.950.10:FF:000001">
    <property type="entry name" value="50S ribosomal protein L2"/>
    <property type="match status" value="1"/>
</dbReference>
<dbReference type="FunFam" id="2.30.30.30:FF:000008">
    <property type="entry name" value="50S ribosomal protein L2, chloroplastic"/>
    <property type="match status" value="1"/>
</dbReference>
<dbReference type="FunFam" id="2.40.50.140:FF:000029">
    <property type="entry name" value="50S ribosomal protein L2, chloroplastic"/>
    <property type="match status" value="1"/>
</dbReference>
<dbReference type="Gene3D" id="2.30.30.30">
    <property type="match status" value="1"/>
</dbReference>
<dbReference type="Gene3D" id="2.40.50.140">
    <property type="entry name" value="Nucleic acid-binding proteins"/>
    <property type="match status" value="1"/>
</dbReference>
<dbReference type="Gene3D" id="4.10.950.10">
    <property type="entry name" value="Ribosomal protein L2, domain 3"/>
    <property type="match status" value="1"/>
</dbReference>
<dbReference type="HAMAP" id="MF_01320_B">
    <property type="entry name" value="Ribosomal_uL2_B"/>
    <property type="match status" value="1"/>
</dbReference>
<dbReference type="InterPro" id="IPR012340">
    <property type="entry name" value="NA-bd_OB-fold"/>
</dbReference>
<dbReference type="InterPro" id="IPR014722">
    <property type="entry name" value="Rib_uL2_dom2"/>
</dbReference>
<dbReference type="InterPro" id="IPR002171">
    <property type="entry name" value="Ribosomal_uL2"/>
</dbReference>
<dbReference type="InterPro" id="IPR005880">
    <property type="entry name" value="Ribosomal_uL2_bac/org-type"/>
</dbReference>
<dbReference type="InterPro" id="IPR022669">
    <property type="entry name" value="Ribosomal_uL2_C"/>
</dbReference>
<dbReference type="InterPro" id="IPR022671">
    <property type="entry name" value="Ribosomal_uL2_CS"/>
</dbReference>
<dbReference type="InterPro" id="IPR014726">
    <property type="entry name" value="Ribosomal_uL2_dom3"/>
</dbReference>
<dbReference type="InterPro" id="IPR022666">
    <property type="entry name" value="Ribosomal_uL2_RNA-bd_dom"/>
</dbReference>
<dbReference type="InterPro" id="IPR008991">
    <property type="entry name" value="Translation_prot_SH3-like_sf"/>
</dbReference>
<dbReference type="NCBIfam" id="TIGR01171">
    <property type="entry name" value="rplB_bact"/>
    <property type="match status" value="1"/>
</dbReference>
<dbReference type="PANTHER" id="PTHR13691:SF5">
    <property type="entry name" value="LARGE RIBOSOMAL SUBUNIT PROTEIN UL2M"/>
    <property type="match status" value="1"/>
</dbReference>
<dbReference type="PANTHER" id="PTHR13691">
    <property type="entry name" value="RIBOSOMAL PROTEIN L2"/>
    <property type="match status" value="1"/>
</dbReference>
<dbReference type="Pfam" id="PF00181">
    <property type="entry name" value="Ribosomal_L2"/>
    <property type="match status" value="1"/>
</dbReference>
<dbReference type="Pfam" id="PF03947">
    <property type="entry name" value="Ribosomal_L2_C"/>
    <property type="match status" value="1"/>
</dbReference>
<dbReference type="PIRSF" id="PIRSF002158">
    <property type="entry name" value="Ribosomal_L2"/>
    <property type="match status" value="1"/>
</dbReference>
<dbReference type="SMART" id="SM01383">
    <property type="entry name" value="Ribosomal_L2"/>
    <property type="match status" value="1"/>
</dbReference>
<dbReference type="SMART" id="SM01382">
    <property type="entry name" value="Ribosomal_L2_C"/>
    <property type="match status" value="1"/>
</dbReference>
<dbReference type="SUPFAM" id="SSF50249">
    <property type="entry name" value="Nucleic acid-binding proteins"/>
    <property type="match status" value="1"/>
</dbReference>
<dbReference type="SUPFAM" id="SSF50104">
    <property type="entry name" value="Translation proteins SH3-like domain"/>
    <property type="match status" value="1"/>
</dbReference>
<dbReference type="PROSITE" id="PS00467">
    <property type="entry name" value="RIBOSOMAL_L2"/>
    <property type="match status" value="1"/>
</dbReference>
<organism>
    <name type="scientific">Crucihimalaya wallichii</name>
    <name type="common">Rock-cress</name>
    <name type="synonym">Arabidopsis campestris</name>
    <dbReference type="NCBI Taxonomy" id="78192"/>
    <lineage>
        <taxon>Eukaryota</taxon>
        <taxon>Viridiplantae</taxon>
        <taxon>Streptophyta</taxon>
        <taxon>Embryophyta</taxon>
        <taxon>Tracheophyta</taxon>
        <taxon>Spermatophyta</taxon>
        <taxon>Magnoliopsida</taxon>
        <taxon>eudicotyledons</taxon>
        <taxon>Gunneridae</taxon>
        <taxon>Pentapetalae</taxon>
        <taxon>rosids</taxon>
        <taxon>malvids</taxon>
        <taxon>Brassicales</taxon>
        <taxon>Brassicaceae</taxon>
        <taxon>Crucihimalayeae</taxon>
        <taxon>Crucihimalaya</taxon>
    </lineage>
</organism>
<gene>
    <name type="primary">rpl2-A</name>
</gene>
<gene>
    <name type="primary">rpl2-B</name>
</gene>
<reference key="1">
    <citation type="submission" date="2007-03" db="EMBL/GenBank/DDBJ databases">
        <title>Sequencing analysis of Crucihimalaya wallichii chloroplast DNA.</title>
        <authorList>
            <person name="Hosouchi T."/>
            <person name="Tsuruoka H."/>
            <person name="Kotani H."/>
        </authorList>
    </citation>
    <scope>NUCLEOTIDE SEQUENCE [LARGE SCALE GENOMIC DNA]</scope>
</reference>
<keyword id="KW-0150">Chloroplast</keyword>
<keyword id="KW-0934">Plastid</keyword>
<keyword id="KW-0687">Ribonucleoprotein</keyword>
<keyword id="KW-0689">Ribosomal protein</keyword>
<accession>A4QKX2</accession>
<name>RK2_CRUWA</name>
<comment type="subunit">
    <text evidence="1">Part of the 50S ribosomal subunit.</text>
</comment>
<comment type="subcellular location">
    <subcellularLocation>
        <location>Plastid</location>
        <location>Chloroplast</location>
    </subcellularLocation>
</comment>
<comment type="similarity">
    <text evidence="4">Belongs to the universal ribosomal protein uL2 family.</text>
</comment>
<feature type="chain" id="PRO_0000310071" description="Large ribosomal subunit protein uL2cz/uL2cy">
    <location>
        <begin position="1"/>
        <end position="274"/>
    </location>
</feature>
<feature type="region of interest" description="Disordered" evidence="3">
    <location>
        <begin position="225"/>
        <end position="274"/>
    </location>
</feature>